<evidence type="ECO:0000255" key="1">
    <source>
        <dbReference type="PROSITE-ProRule" id="PRU00628"/>
    </source>
</evidence>
<evidence type="ECO:0000269" key="2">
    <source>
    </source>
</evidence>
<evidence type="ECO:0000269" key="3">
    <source>
    </source>
</evidence>
<evidence type="ECO:0000269" key="4">
    <source>
    </source>
</evidence>
<evidence type="ECO:0000269" key="5">
    <source>
    </source>
</evidence>
<evidence type="ECO:0000269" key="6">
    <source>
    </source>
</evidence>
<evidence type="ECO:0000303" key="7">
    <source>
    </source>
</evidence>
<evidence type="ECO:0000303" key="8">
    <source>
    </source>
</evidence>
<evidence type="ECO:0000303" key="9">
    <source>
    </source>
</evidence>
<evidence type="ECO:0000305" key="10"/>
<evidence type="ECO:0000305" key="11">
    <source>
    </source>
</evidence>
<evidence type="ECO:0000305" key="12">
    <source>
    </source>
</evidence>
<keyword id="KW-0001">2Fe-2S</keyword>
<keyword id="KW-0025">Alternative splicing</keyword>
<keyword id="KW-0963">Cytoplasm</keyword>
<keyword id="KW-0903">Direct protein sequencing</keyword>
<keyword id="KW-0249">Electron transport</keyword>
<keyword id="KW-0256">Endoplasmic reticulum</keyword>
<keyword id="KW-0408">Iron</keyword>
<keyword id="KW-0411">Iron-sulfur</keyword>
<keyword id="KW-0479">Metal-binding</keyword>
<keyword id="KW-0560">Oxidoreductase</keyword>
<keyword id="KW-1185">Reference proteome</keyword>
<keyword id="KW-0813">Transport</keyword>
<feature type="propeptide" id="PRO_0000030699" evidence="11">
    <location>
        <begin position="1"/>
        <end position="4"/>
    </location>
</feature>
<feature type="chain" id="PRO_0000030700" description="Cytidine monophosphate-N-acetylneuraminic acid hydroxylase">
    <location>
        <begin position="5"/>
        <end position="577"/>
    </location>
</feature>
<feature type="domain" description="Rieske" evidence="1">
    <location>
        <begin position="14"/>
        <end position="112"/>
    </location>
</feature>
<feature type="binding site" evidence="1">
    <location>
        <position position="54"/>
    </location>
    <ligand>
        <name>[2Fe-2S] cluster</name>
        <dbReference type="ChEBI" id="CHEBI:190135"/>
    </ligand>
</feature>
<feature type="binding site" evidence="1">
    <location>
        <position position="56"/>
    </location>
    <ligand>
        <name>[2Fe-2S] cluster</name>
        <dbReference type="ChEBI" id="CHEBI:190135"/>
    </ligand>
</feature>
<feature type="binding site" evidence="1">
    <location>
        <position position="75"/>
    </location>
    <ligand>
        <name>[2Fe-2S] cluster</name>
        <dbReference type="ChEBI" id="CHEBI:190135"/>
    </ligand>
</feature>
<feature type="binding site" evidence="1">
    <location>
        <position position="78"/>
    </location>
    <ligand>
        <name>[2Fe-2S] cluster</name>
        <dbReference type="ChEBI" id="CHEBI:190135"/>
    </ligand>
</feature>
<feature type="splice variant" id="VSP_013769" description="In isoform 2." evidence="7">
    <location>
        <begin position="279"/>
        <end position="324"/>
    </location>
</feature>
<feature type="sequence conflict" description="In Ref. 4; AAH55079." evidence="10" ref="4">
    <original>I</original>
    <variation>T</variation>
    <location>
        <position position="515"/>
    </location>
</feature>
<dbReference type="EC" id="1.14.18.2" evidence="2 5"/>
<dbReference type="EMBL" id="D21826">
    <property type="protein sequence ID" value="BAA04850.1"/>
    <property type="molecule type" value="mRNA"/>
</dbReference>
<dbReference type="EMBL" id="AB061276">
    <property type="protein sequence ID" value="BAB91361.1"/>
    <property type="status" value="ALT_INIT"/>
    <property type="molecule type" value="mRNA"/>
</dbReference>
<dbReference type="EMBL" id="AB061277">
    <property type="protein sequence ID" value="BAB91362.1"/>
    <property type="status" value="ALT_INIT"/>
    <property type="molecule type" value="mRNA"/>
</dbReference>
<dbReference type="EMBL" id="AB061346">
    <property type="protein sequence ID" value="BAB91553.1"/>
    <property type="status" value="ALT_INIT"/>
    <property type="molecule type" value="Genomic_DNA"/>
</dbReference>
<dbReference type="EMBL" id="AL589744">
    <property type="status" value="NOT_ANNOTATED_CDS"/>
    <property type="molecule type" value="Genomic_DNA"/>
</dbReference>
<dbReference type="EMBL" id="BC055079">
    <property type="protein sequence ID" value="AAH55079.1"/>
    <property type="molecule type" value="mRNA"/>
</dbReference>
<dbReference type="CCDS" id="CCDS26376.1">
    <molecule id="Q61419-1"/>
</dbReference>
<dbReference type="PIR" id="A57469">
    <property type="entry name" value="A57469"/>
</dbReference>
<dbReference type="RefSeq" id="NP_001104580.1">
    <molecule id="Q61419-1"/>
    <property type="nucleotide sequence ID" value="NM_001111110.2"/>
</dbReference>
<dbReference type="RefSeq" id="NP_001271448.1">
    <molecule id="Q61419-1"/>
    <property type="nucleotide sequence ID" value="NM_001284519.1"/>
</dbReference>
<dbReference type="RefSeq" id="NP_001271449.1">
    <molecule id="Q61419-2"/>
    <property type="nucleotide sequence ID" value="NM_001284520.1"/>
</dbReference>
<dbReference type="RefSeq" id="NP_031743.3">
    <molecule id="Q61419-1"/>
    <property type="nucleotide sequence ID" value="NM_007717.5"/>
</dbReference>
<dbReference type="FunCoup" id="Q61419">
    <property type="interactions" value="605"/>
</dbReference>
<dbReference type="STRING" id="10090.ENSMUSP00000106021"/>
<dbReference type="iPTMnet" id="Q61419"/>
<dbReference type="PhosphoSitePlus" id="Q61419"/>
<dbReference type="jPOST" id="Q61419"/>
<dbReference type="PaxDb" id="10090-ENSMUSP00000129007"/>
<dbReference type="ProteomicsDB" id="283635">
    <molecule id="Q61419-1"/>
</dbReference>
<dbReference type="ProteomicsDB" id="283636">
    <molecule id="Q61419-2"/>
</dbReference>
<dbReference type="DNASU" id="12763"/>
<dbReference type="Ensembl" id="ENSMUST00000050859.13">
    <molecule id="Q61419-1"/>
    <property type="protein sequence ID" value="ENSMUSP00000061045.6"/>
    <property type="gene ID" value="ENSMUSG00000016756.18"/>
</dbReference>
<dbReference type="Ensembl" id="ENSMUST00000110391.4">
    <molecule id="Q61419-1"/>
    <property type="protein sequence ID" value="ENSMUSP00000106021.3"/>
    <property type="gene ID" value="ENSMUSG00000016756.18"/>
</dbReference>
<dbReference type="Ensembl" id="ENSMUST00000167746.8">
    <molecule id="Q61419-1"/>
    <property type="protein sequence ID" value="ENSMUSP00000129007.2"/>
    <property type="gene ID" value="ENSMUSG00000016756.18"/>
</dbReference>
<dbReference type="Ensembl" id="ENSMUST00000224657.2">
    <molecule id="Q61419-1"/>
    <property type="protein sequence ID" value="ENSMUSP00000153495.2"/>
    <property type="gene ID" value="ENSMUSG00000016756.18"/>
</dbReference>
<dbReference type="Ensembl" id="ENSMUST00000224953.2">
    <molecule id="Q61419-1"/>
    <property type="protein sequence ID" value="ENSMUSP00000153652.2"/>
    <property type="gene ID" value="ENSMUSG00000016756.18"/>
</dbReference>
<dbReference type="GeneID" id="12763"/>
<dbReference type="KEGG" id="mmu:12763"/>
<dbReference type="UCSC" id="uc007pvq.3">
    <molecule id="Q61419-1"/>
    <property type="organism name" value="mouse"/>
</dbReference>
<dbReference type="UCSC" id="uc011yxn.2">
    <molecule id="Q61419-2"/>
    <property type="organism name" value="mouse"/>
</dbReference>
<dbReference type="AGR" id="MGI:103227"/>
<dbReference type="CTD" id="12763"/>
<dbReference type="MGI" id="MGI:103227">
    <property type="gene designation" value="Cmah"/>
</dbReference>
<dbReference type="VEuPathDB" id="HostDB:ENSMUSG00000016756"/>
<dbReference type="eggNOG" id="ENOG502QR0M">
    <property type="taxonomic scope" value="Eukaryota"/>
</dbReference>
<dbReference type="GeneTree" id="ENSGT00390000010830"/>
<dbReference type="HOGENOM" id="CLU_034056_0_0_1"/>
<dbReference type="InParanoid" id="Q61419"/>
<dbReference type="OMA" id="WKSFLMC"/>
<dbReference type="OrthoDB" id="332863at2759"/>
<dbReference type="PhylomeDB" id="Q61419"/>
<dbReference type="TreeFam" id="TF331273"/>
<dbReference type="BioCyc" id="MetaCyc:MONOMER-14525"/>
<dbReference type="SABIO-RK" id="Q61419"/>
<dbReference type="UniPathway" id="UPA00628"/>
<dbReference type="BioGRID-ORCS" id="12763">
    <property type="hits" value="2 hits in 78 CRISPR screens"/>
</dbReference>
<dbReference type="ChiTaRS" id="Cmah">
    <property type="organism name" value="mouse"/>
</dbReference>
<dbReference type="PRO" id="PR:Q61419"/>
<dbReference type="Proteomes" id="UP000000589">
    <property type="component" value="Chromosome 13"/>
</dbReference>
<dbReference type="RNAct" id="Q61419">
    <property type="molecule type" value="protein"/>
</dbReference>
<dbReference type="Bgee" id="ENSMUSG00000016756">
    <property type="expression patterns" value="Expressed in conjunctival fornix and 189 other cell types or tissues"/>
</dbReference>
<dbReference type="ExpressionAtlas" id="Q61419">
    <property type="expression patterns" value="baseline and differential"/>
</dbReference>
<dbReference type="GO" id="GO:0005737">
    <property type="term" value="C:cytoplasm"/>
    <property type="evidence" value="ECO:0000314"/>
    <property type="project" value="MGI"/>
</dbReference>
<dbReference type="GO" id="GO:0005783">
    <property type="term" value="C:endoplasmic reticulum"/>
    <property type="evidence" value="ECO:0007669"/>
    <property type="project" value="UniProtKB-SubCell"/>
</dbReference>
<dbReference type="GO" id="GO:0051537">
    <property type="term" value="F:2 iron, 2 sulfur cluster binding"/>
    <property type="evidence" value="ECO:0007669"/>
    <property type="project" value="UniProtKB-KW"/>
</dbReference>
<dbReference type="GO" id="GO:0030338">
    <property type="term" value="F:CMP-N-acetylneuraminate monooxygenase activity"/>
    <property type="evidence" value="ECO:0000314"/>
    <property type="project" value="CACAO"/>
</dbReference>
<dbReference type="GO" id="GO:0046872">
    <property type="term" value="F:metal ion binding"/>
    <property type="evidence" value="ECO:0007669"/>
    <property type="project" value="UniProtKB-KW"/>
</dbReference>
<dbReference type="GO" id="GO:0046381">
    <property type="term" value="P:CMP-N-acetylneuraminate metabolic process"/>
    <property type="evidence" value="ECO:0000314"/>
    <property type="project" value="MGI"/>
</dbReference>
<dbReference type="GO" id="GO:0006054">
    <property type="term" value="P:N-acetylneuraminate metabolic process"/>
    <property type="evidence" value="ECO:0007669"/>
    <property type="project" value="UniProtKB-UniPathway"/>
</dbReference>
<dbReference type="CDD" id="cd03473">
    <property type="entry name" value="Rieske_CMP_Neu5Ac_hydrolase_N"/>
    <property type="match status" value="1"/>
</dbReference>
<dbReference type="FunFam" id="3.60.15.10:FF:000025">
    <property type="entry name" value="Inactive cytidine monophosphate-N-acetylneuraminic acid hydroxylase"/>
    <property type="match status" value="1"/>
</dbReference>
<dbReference type="Gene3D" id="3.60.15.10">
    <property type="entry name" value="Ribonuclease Z/Hydroxyacylglutathione hydrolase-like"/>
    <property type="match status" value="1"/>
</dbReference>
<dbReference type="Gene3D" id="2.102.10.10">
    <property type="entry name" value="Rieske [2Fe-2S] iron-sulphur domain"/>
    <property type="match status" value="1"/>
</dbReference>
<dbReference type="InterPro" id="IPR037339">
    <property type="entry name" value="CMP-Neu5Ac_hydroxylase_Rieske"/>
</dbReference>
<dbReference type="InterPro" id="IPR027033">
    <property type="entry name" value="Cnh"/>
</dbReference>
<dbReference type="InterPro" id="IPR036866">
    <property type="entry name" value="RibonucZ/Hydroxyglut_hydro"/>
</dbReference>
<dbReference type="InterPro" id="IPR017941">
    <property type="entry name" value="Rieske_2Fe-2S"/>
</dbReference>
<dbReference type="InterPro" id="IPR036922">
    <property type="entry name" value="Rieske_2Fe-2S_sf"/>
</dbReference>
<dbReference type="PANTHER" id="PTHR46522">
    <property type="entry name" value="CYTIDINE MONOPHOSPHATE-N-ACETYLNEURAMINIC ACID HYDROXYLASE"/>
    <property type="match status" value="1"/>
</dbReference>
<dbReference type="PANTHER" id="PTHR46522:SF1">
    <property type="entry name" value="INACTIVE CYTIDINE MONOPHOSPHATE-N-ACETYLNEURAMINIC ACID HYDROXYLASE"/>
    <property type="match status" value="1"/>
</dbReference>
<dbReference type="Pfam" id="PF13483">
    <property type="entry name" value="Lactamase_B_3"/>
    <property type="match status" value="1"/>
</dbReference>
<dbReference type="Pfam" id="PF00355">
    <property type="entry name" value="Rieske"/>
    <property type="match status" value="1"/>
</dbReference>
<dbReference type="SUPFAM" id="SSF50022">
    <property type="entry name" value="ISP domain"/>
    <property type="match status" value="1"/>
</dbReference>
<dbReference type="SUPFAM" id="SSF56281">
    <property type="entry name" value="Metallo-hydrolase/oxidoreductase"/>
    <property type="match status" value="1"/>
</dbReference>
<dbReference type="PROSITE" id="PS51296">
    <property type="entry name" value="RIESKE"/>
    <property type="match status" value="1"/>
</dbReference>
<comment type="function">
    <text evidence="3">Sialic acids are components of carbohydrate chains of glycoconjugates and are involved in cell-cell recognition and cell-pathogen interactions. Catalyzes the conversion of CMP-N-acetylneuraminic acid (CMP-Neu5Ac) into its hydroxylated derivative CMP-N-glycolylneuraminic acid (CMP-Neu5Gc), a sialic acid abundantly expressed at the surface of many cells.</text>
</comment>
<comment type="catalytic activity">
    <reaction evidence="2 3 5">
        <text>CMP-N-acetyl-beta-neuraminate + 2 Fe(II)-[cytochrome b5] + O2 + 2 H(+) = CMP-N-glycoloyl-beta-neuraminate + 2 Fe(III)-[cytochrome b5] + H2O</text>
        <dbReference type="Rhea" id="RHEA:16145"/>
        <dbReference type="Rhea" id="RHEA-COMP:10438"/>
        <dbReference type="Rhea" id="RHEA-COMP:10439"/>
        <dbReference type="ChEBI" id="CHEBI:15377"/>
        <dbReference type="ChEBI" id="CHEBI:15378"/>
        <dbReference type="ChEBI" id="CHEBI:15379"/>
        <dbReference type="ChEBI" id="CHEBI:29033"/>
        <dbReference type="ChEBI" id="CHEBI:29034"/>
        <dbReference type="ChEBI" id="CHEBI:57812"/>
        <dbReference type="ChEBI" id="CHEBI:58376"/>
        <dbReference type="EC" id="1.14.18.2"/>
    </reaction>
</comment>
<comment type="cofactor">
    <cofactor evidence="12">
        <name>[2Fe-2S] cluster</name>
        <dbReference type="ChEBI" id="CHEBI:190135"/>
    </cofactor>
    <text evidence="12">Binds 1 [2Fe-2S] cluster per subunit.</text>
</comment>
<comment type="biophysicochemical properties">
    <kinetics>
        <KM evidence="5">5 uM for CMP-NeuAc</KM>
        <KM evidence="2">1.3 uM for CMP-NeuAc</KM>
    </kinetics>
</comment>
<comment type="pathway">
    <text>Amino-sugar metabolism; N-acetylneuraminate metabolism.</text>
</comment>
<comment type="subcellular location">
    <subcellularLocation>
        <location evidence="4 6">Cytoplasm</location>
    </subcellularLocation>
</comment>
<comment type="subcellular location">
    <molecule>Isoform 2</molecule>
    <subcellularLocation>
        <location evidence="10">Endoplasmic reticulum</location>
    </subcellularLocation>
</comment>
<comment type="alternative products">
    <event type="alternative splicing"/>
    <isoform>
        <id>Q61419-1</id>
        <name>1</name>
        <sequence type="displayed"/>
    </isoform>
    <isoform>
        <id>Q61419-2</id>
        <name>2</name>
        <sequence type="described" ref="VSP_013769"/>
    </isoform>
</comment>
<comment type="tissue specificity">
    <text evidence="4">Expressed in all tissues tested, except in brain.</text>
</comment>
<comment type="disruption phenotype">
    <text evidence="3">Mice do not synthesize N-glycolylneuraminic acid (Neu5Gc).</text>
</comment>
<comment type="miscellaneous">
    <molecule>Isoform 2</molecule>
    <text evidence="10">Inactive.</text>
</comment>
<comment type="similarity">
    <text evidence="10">Belongs to the CMP-Neu5Ac hydroxylase family.</text>
</comment>
<comment type="sequence caution" evidence="10">
    <conflict type="erroneous initiation">
        <sequence resource="EMBL-CDS" id="BAB91361"/>
    </conflict>
</comment>
<comment type="sequence caution" evidence="10">
    <conflict type="erroneous initiation">
        <sequence resource="EMBL-CDS" id="BAB91362"/>
    </conflict>
</comment>
<comment type="sequence caution" evidence="10">
    <conflict type="erroneous initiation">
        <sequence resource="EMBL-CDS" id="BAB91553"/>
    </conflict>
</comment>
<organism>
    <name type="scientific">Mus musculus</name>
    <name type="common">Mouse</name>
    <dbReference type="NCBI Taxonomy" id="10090"/>
    <lineage>
        <taxon>Eukaryota</taxon>
        <taxon>Metazoa</taxon>
        <taxon>Chordata</taxon>
        <taxon>Craniata</taxon>
        <taxon>Vertebrata</taxon>
        <taxon>Euteleostomi</taxon>
        <taxon>Mammalia</taxon>
        <taxon>Eutheria</taxon>
        <taxon>Euarchontoglires</taxon>
        <taxon>Glires</taxon>
        <taxon>Rodentia</taxon>
        <taxon>Myomorpha</taxon>
        <taxon>Muroidea</taxon>
        <taxon>Muridae</taxon>
        <taxon>Murinae</taxon>
        <taxon>Mus</taxon>
        <taxon>Mus</taxon>
    </lineage>
</organism>
<reference key="1">
    <citation type="journal article" date="1995" name="J. Biol. Chem.">
        <title>Molecular cloning of cytidine monophospho-N-acetylneuraminic acid hydroxylase.</title>
        <authorList>
            <person name="Kawano T."/>
            <person name="Koyama S."/>
            <person name="Takematsu H."/>
            <person name="Kozutsumi Y."/>
            <person name="Kawasaki H."/>
            <person name="Kawashima S."/>
            <person name="Kawasaki T."/>
            <person name="Suzuki A."/>
        </authorList>
    </citation>
    <scope>NUCLEOTIDE SEQUENCE [MRNA] (ISOFORM 1)</scope>
    <scope>PROTEIN SEQUENCE OF 5-33; 504-524 AND 543-561</scope>
    <scope>SUBCELLULAR LOCATION</scope>
    <scope>TISSUE SPECIFICITY</scope>
    <source>
        <strain>BALB/cJ</strain>
        <tissue>Liver</tissue>
    </source>
</reference>
<reference key="2">
    <citation type="submission" date="2001-05" db="EMBL/GenBank/DDBJ databases">
        <title>Isolation and analysis of the mouse gene encoding CMP-N-acetylneuraminic acid hydroxylase.</title>
        <authorList>
            <person name="Koyama S."/>
            <person name="Takematsu H."/>
            <person name="Takasaki-Nishigaki M."/>
            <person name="Kawasaki T."/>
            <person name="Suzuki A."/>
            <person name="Kozutsumi Y."/>
        </authorList>
    </citation>
    <scope>NUCLEOTIDE SEQUENCE [GENOMIC DNA / MRNA] (ISOFORM 1)</scope>
    <source>
        <strain>BALB/cJ</strain>
        <tissue>Liver</tissue>
    </source>
</reference>
<reference key="3">
    <citation type="journal article" date="2009" name="PLoS Biol.">
        <title>Lineage-specific biology revealed by a finished genome assembly of the mouse.</title>
        <authorList>
            <person name="Church D.M."/>
            <person name="Goodstadt L."/>
            <person name="Hillier L.W."/>
            <person name="Zody M.C."/>
            <person name="Goldstein S."/>
            <person name="She X."/>
            <person name="Bult C.J."/>
            <person name="Agarwala R."/>
            <person name="Cherry J.L."/>
            <person name="DiCuccio M."/>
            <person name="Hlavina W."/>
            <person name="Kapustin Y."/>
            <person name="Meric P."/>
            <person name="Maglott D."/>
            <person name="Birtle Z."/>
            <person name="Marques A.C."/>
            <person name="Graves T."/>
            <person name="Zhou S."/>
            <person name="Teague B."/>
            <person name="Potamousis K."/>
            <person name="Churas C."/>
            <person name="Place M."/>
            <person name="Herschleb J."/>
            <person name="Runnheim R."/>
            <person name="Forrest D."/>
            <person name="Amos-Landgraf J."/>
            <person name="Schwartz D.C."/>
            <person name="Cheng Z."/>
            <person name="Lindblad-Toh K."/>
            <person name="Eichler E.E."/>
            <person name="Ponting C.P."/>
        </authorList>
    </citation>
    <scope>NUCLEOTIDE SEQUENCE [LARGE SCALE GENOMIC DNA]</scope>
    <source>
        <strain>C57BL/6J</strain>
    </source>
</reference>
<reference key="4">
    <citation type="journal article" date="2004" name="Genome Res.">
        <title>The status, quality, and expansion of the NIH full-length cDNA project: the Mammalian Gene Collection (MGC).</title>
        <authorList>
            <consortium name="The MGC Project Team"/>
        </authorList>
    </citation>
    <scope>NUCLEOTIDE SEQUENCE [LARGE SCALE MRNA] (ISOFORM 2)</scope>
    <source>
        <strain>C57BL/6NCr</strain>
        <tissue>Hematopoietic stem cell</tissue>
    </source>
</reference>
<reference key="5">
    <citation type="journal article" date="1992" name="Eur. J. Biochem.">
        <title>Mouse liver cytidine-5'-monophosphate-N-acetylneuraminic acid hydroxylase. Catalytic function and regulation.</title>
        <authorList>
            <person name="Shaw L."/>
            <person name="Schneckenburger P."/>
            <person name="Carlsen J."/>
            <person name="Christiansen K."/>
            <person name="Schauer R."/>
        </authorList>
    </citation>
    <scope>CATALYTIC ACTIVITY</scope>
    <scope>BIOPHYSICOCHEMICAL PROPERTIES</scope>
</reference>
<reference key="6">
    <citation type="journal article" date="1994" name="J. Biol. Chem.">
        <title>Biosynthesis of N-glycolylneuraminic acid-containing glycoconjugates. Purification and characterization of the key enzyme of the cytidine monophospho-N-acetylneuraminic acid hydroxylation system.</title>
        <authorList>
            <person name="Kawano T."/>
            <person name="Kozutsumi Y."/>
            <person name="Kawasaki T."/>
            <person name="Suzuki A."/>
        </authorList>
    </citation>
    <scope>CATALYTIC ACTIVITY</scope>
    <scope>COFACTOR</scope>
    <scope>BIOPHYSICOCHEMICAL PROPERTIES</scope>
</reference>
<reference key="7">
    <citation type="journal article" date="1996" name="Glycoconj. J.">
        <title>A naturally occurring 46-amino acid deletion of cytidine monophospho-N-acetylneuraminic acid hydroxylase leads to a change in the intracellular distribution of the protein.</title>
        <authorList>
            <person name="Koyama S."/>
            <person name="Yamaji T."/>
            <person name="Takematsu H."/>
            <person name="Kawano T."/>
            <person name="Kozutsumi Y."/>
            <person name="Suzuki A."/>
            <person name="Kawasaki T."/>
        </authorList>
    </citation>
    <scope>ALTERNATIVE SPLICING</scope>
    <scope>SUBCELLULAR LOCATION</scope>
</reference>
<reference key="8">
    <citation type="journal article" date="2010" name="Cell">
        <title>A tissue-specific atlas of mouse protein phosphorylation and expression.</title>
        <authorList>
            <person name="Huttlin E.L."/>
            <person name="Jedrychowski M.P."/>
            <person name="Elias J.E."/>
            <person name="Goswami T."/>
            <person name="Rad R."/>
            <person name="Beausoleil S.A."/>
            <person name="Villen J."/>
            <person name="Haas W."/>
            <person name="Sowa M.E."/>
            <person name="Gygi S.P."/>
        </authorList>
    </citation>
    <scope>IDENTIFICATION BY MASS SPECTROMETRY [LARGE SCALE ANALYSIS]</scope>
    <source>
        <tissue>Liver</tissue>
    </source>
</reference>
<reference key="9">
    <citation type="journal article" date="2012" name="J. Biol. Chem.">
        <title>Metabolism of vertebrate amino sugars with N-glycolyl groups: elucidating the intracellular fate of the non-human sialic acid N-glycolylneuraminic acid.</title>
        <authorList>
            <person name="Bergfeld A.K."/>
            <person name="Pearce O.M."/>
            <person name="Diaz S.L."/>
            <person name="Pham T."/>
            <person name="Varki A."/>
        </authorList>
    </citation>
    <scope>FUNCTION</scope>
    <scope>CATALYTIC ACTIVITY</scope>
    <scope>DISRUPTION PHENOTYPE</scope>
</reference>
<proteinExistence type="evidence at protein level"/>
<gene>
    <name type="primary">Cmah</name>
</gene>
<accession>Q61419</accession>
<accession>Q7TMR9</accession>
<accession>Q8JZM9</accession>
<sequence>MMDRKQTAETLLTLSPAEVANLKEGINFFRNKTTGKEYILYKEKDHLKACKNLCKHQGGLFMKDIEDLDGRSVKCTKHNWKLDVSTMKYINPPGSFCQDELVIEMDENNGLSLVELNPPNPWDSDPRSPEELAFGEVQITYLTHACMDLKLGDKRMVFDPWLIGPAFARGWWLLHEPPSDWLERLCKADLIYISHMHSDHLSYPTLKQLSQRRPDIPIYVGDTERPVFWNLDQSGVGLTNINVVPFGIWQQVDKSLRFMILMDGVHPEMDTCIIVEYKGHKILNTVDCTRPNGGRLPEKVALMMSDFAGGASGFPMTFSGGKFTEEWKAQFIKAERRKLLNYKAQLVKDLQPRIYCPFAGYFVESHPSDKYIKETNTKNDPNQLNNLIRKNSDVVTWTPRPGAVLDLGRMLKDPTDSKGIVEPPEGTKIYKDSWDFGPYLEILNSAVRDEIFCHSSWIKEYFTWAGFKNYNLVVRMIETDEDFSPFPGGYDYLVDFLDLSFPKERPSREHPYEEIHSRVDVIRYVVKNGLLWDDLYIGFQTRLLRDPDIYHHLFWNHFQIKLPLTPPNWKSFLMHCD</sequence>
<protein>
    <recommendedName>
        <fullName>Cytidine monophosphate-N-acetylneuraminic acid hydroxylase</fullName>
        <shortName>CMP-N-acetylneuraminic acid hydroxylase</shortName>
        <ecNumber evidence="2 5">1.14.18.2</ecNumber>
    </recommendedName>
    <alternativeName>
        <fullName>CMP-N-acetylneuraminate monooxygenase</fullName>
    </alternativeName>
    <alternativeName>
        <fullName evidence="8">CMP-Neu5Ac hydroxylase</fullName>
    </alternativeName>
    <alternativeName>
        <fullName evidence="9">CMP-NeuAc hydroxylase</fullName>
    </alternativeName>
</protein>
<name>CMAH_MOUSE</name>